<organism>
    <name type="scientific">Lactiplantibacillus plantarum (strain ATCC BAA-793 / NCIMB 8826 / WCFS1)</name>
    <name type="common">Lactobacillus plantarum</name>
    <dbReference type="NCBI Taxonomy" id="220668"/>
    <lineage>
        <taxon>Bacteria</taxon>
        <taxon>Bacillati</taxon>
        <taxon>Bacillota</taxon>
        <taxon>Bacilli</taxon>
        <taxon>Lactobacillales</taxon>
        <taxon>Lactobacillaceae</taxon>
        <taxon>Lactiplantibacillus</taxon>
    </lineage>
</organism>
<name>LPDD_LACPL</name>
<dbReference type="EMBL" id="AL935263">
    <property type="protein sequence ID" value="CCC77799.1"/>
    <property type="molecule type" value="Genomic_DNA"/>
</dbReference>
<dbReference type="RefSeq" id="WP_011100947.1">
    <property type="nucleotide sequence ID" value="NC_004567.2"/>
</dbReference>
<dbReference type="RefSeq" id="YP_004888313.1">
    <property type="nucleotide sequence ID" value="NC_004567.2"/>
</dbReference>
<dbReference type="PDB" id="8P4W">
    <property type="method" value="X-ray"/>
    <property type="resolution" value="1.78 A"/>
    <property type="chains" value="A=1-136"/>
</dbReference>
<dbReference type="PDB" id="8PO5">
    <property type="method" value="X-ray"/>
    <property type="resolution" value="2.10 A"/>
    <property type="chains" value="A/B=1-136"/>
</dbReference>
<dbReference type="PDB" id="8PZH">
    <property type="method" value="X-ray"/>
    <property type="resolution" value="2.02 A"/>
    <property type="chains" value="A/B=1-136"/>
</dbReference>
<dbReference type="PDB" id="8PZO">
    <property type="method" value="X-ray"/>
    <property type="resolution" value="2.00 A"/>
    <property type="chains" value="A/B=1-136"/>
</dbReference>
<dbReference type="PDBsum" id="8P4W"/>
<dbReference type="PDBsum" id="8PO5"/>
<dbReference type="PDBsum" id="8PZH"/>
<dbReference type="PDBsum" id="8PZO"/>
<dbReference type="SMR" id="F9UT68"/>
<dbReference type="STRING" id="220668.lp_0272"/>
<dbReference type="EnsemblBacteria" id="CCC77799">
    <property type="protein sequence ID" value="CCC77799"/>
    <property type="gene ID" value="lp_0272"/>
</dbReference>
<dbReference type="KEGG" id="lpl:lp_0272"/>
<dbReference type="PATRIC" id="fig|220668.9.peg.226"/>
<dbReference type="eggNOG" id="ENOG5033YIJ">
    <property type="taxonomic scope" value="Bacteria"/>
</dbReference>
<dbReference type="HOGENOM" id="CLU_139132_1_0_9"/>
<dbReference type="OrthoDB" id="2243237at2"/>
<dbReference type="BioCyc" id="MetaCyc:MONOMER-19904"/>
<dbReference type="Proteomes" id="UP000000432">
    <property type="component" value="Chromosome"/>
</dbReference>
<dbReference type="InterPro" id="IPR048844">
    <property type="entry name" value="LpdD-like_chaperone-like"/>
</dbReference>
<dbReference type="Pfam" id="PF21758">
    <property type="entry name" value="PAC_bac"/>
    <property type="match status" value="1"/>
</dbReference>
<sequence length="136" mass="15030">MATFTTEQAGYQMQAILQVIGYDLLIVVTGGTNPHIGDVTTLTASTVPETVKFPSHDGRFHKDNFISERMAKRIQRYLAGSCTITAGIHVNQITKAQIAAAAPMTDDLSRQIISWLQAHPVQAEKPEYYGQDEQPR</sequence>
<comment type="function">
    <text evidence="4">Probably involved in tannin degradation, however the precise biochemical function in metabolism of gallate is unknown.</text>
</comment>
<comment type="disruption phenotype">
    <text evidence="1">Cells lacking this gene are able to decarboxylate gallic acid and protocatechuic acid.</text>
</comment>
<comment type="miscellaneous">
    <text evidence="1">Gallate decarboxylase does not form a complex composed of Lpdc, LpdB and LpdD. The term subunit has been used in reference to the three-gene operon. Gallate decarboxylase LpdC is the only protein required to yield the gallate decarboxylase activity.</text>
</comment>
<comment type="similarity">
    <text evidence="3">Belongs to the CinA family.</text>
</comment>
<keyword id="KW-0002">3D-structure</keyword>
<keyword id="KW-1185">Reference proteome</keyword>
<feature type="chain" id="PRO_0000444027" description="Protein LpdD">
    <location>
        <begin position="1"/>
        <end position="136"/>
    </location>
</feature>
<feature type="strand" evidence="7">
    <location>
        <begin position="2"/>
        <end position="8"/>
    </location>
</feature>
<feature type="strand" evidence="7">
    <location>
        <begin position="11"/>
        <end position="20"/>
    </location>
</feature>
<feature type="strand" evidence="7">
    <location>
        <begin position="23"/>
        <end position="30"/>
    </location>
</feature>
<feature type="strand" evidence="7">
    <location>
        <begin position="38"/>
        <end position="43"/>
    </location>
</feature>
<feature type="strand" evidence="7">
    <location>
        <begin position="46"/>
        <end position="52"/>
    </location>
</feature>
<feature type="helix" evidence="7">
    <location>
        <begin position="64"/>
        <end position="74"/>
    </location>
</feature>
<feature type="helix" evidence="7">
    <location>
        <begin position="75"/>
        <end position="77"/>
    </location>
</feature>
<feature type="strand" evidence="7">
    <location>
        <begin position="79"/>
        <end position="88"/>
    </location>
</feature>
<feature type="turn" evidence="7">
    <location>
        <begin position="90"/>
        <end position="92"/>
    </location>
</feature>
<feature type="helix" evidence="7">
    <location>
        <begin position="95"/>
        <end position="118"/>
    </location>
</feature>
<gene>
    <name evidence="2" type="primary">lpdD</name>
    <name evidence="5" type="ordered locus">lp_0272</name>
</gene>
<proteinExistence type="evidence at protein level"/>
<reference key="1">
    <citation type="journal article" date="2003" name="Proc. Natl. Acad. Sci. U.S.A.">
        <title>Complete genome sequence of Lactobacillus plantarum WCFS1.</title>
        <authorList>
            <person name="Kleerebezem M."/>
            <person name="Boekhorst J."/>
            <person name="van Kranenburg R."/>
            <person name="Molenaar D."/>
            <person name="Kuipers O.P."/>
            <person name="Leer R."/>
            <person name="Tarchini R."/>
            <person name="Peters S.A."/>
            <person name="Sandbrink H.M."/>
            <person name="Fiers M.W.E.J."/>
            <person name="Stiekema W."/>
            <person name="Klein Lankhorst R.M."/>
            <person name="Bron P.A."/>
            <person name="Hoffer S.M."/>
            <person name="Nierop Groot M.N."/>
            <person name="Kerkhoven R."/>
            <person name="De Vries M."/>
            <person name="Ursing B."/>
            <person name="De Vos W.M."/>
            <person name="Siezen R.J."/>
        </authorList>
    </citation>
    <scope>NUCLEOTIDE SEQUENCE [LARGE SCALE GENOMIC DNA]</scope>
    <source>
        <strain evidence="6">ATCC BAA-793 / NCIMB 8826 / WCFS1</strain>
    </source>
</reference>
<reference key="2">
    <citation type="journal article" date="2012" name="J. Bacteriol.">
        <title>Complete resequencing and reannotation of the Lactobacillus plantarum WCFS1 genome.</title>
        <authorList>
            <person name="Siezen R.J."/>
            <person name="Francke C."/>
            <person name="Renckens B."/>
            <person name="Boekhorst J."/>
            <person name="Wels M."/>
            <person name="Kleerebezem M."/>
            <person name="van Hijum S.A."/>
        </authorList>
    </citation>
    <scope>NUCLEOTIDE SEQUENCE [LARGE SCALE GENOMIC DNA]</scope>
    <scope>GENOME REANNOTATION</scope>
    <source>
        <strain>ATCC BAA-793 / NCIMB 8826 / WCFS1</strain>
    </source>
</reference>
<reference key="3">
    <citation type="journal article" date="2013" name="Appl. Environ. Microbiol.">
        <title>Uncovering the Lactobacillus plantarum WCFS1 gallate decarboxylase involved in tannin degradation.</title>
        <authorList>
            <person name="Jimenez N."/>
            <person name="Curiel J.A."/>
            <person name="Reveron I."/>
            <person name="de Las Rivas B."/>
            <person name="Munoz R."/>
        </authorList>
    </citation>
    <scope>FUNCTION</scope>
    <scope>DISRUPTION PHENOTYPE</scope>
    <source>
        <strain>ATCC BAA-793 / NCIMB 8826 / WCFS1</strain>
    </source>
</reference>
<accession>F9UT68</accession>
<protein>
    <recommendedName>
        <fullName evidence="4">Protein LpdD</fullName>
    </recommendedName>
    <alternativeName>
        <fullName evidence="2">Gallate decarboxylase subunit D</fullName>
    </alternativeName>
</protein>
<evidence type="ECO:0000269" key="1">
    <source>
    </source>
</evidence>
<evidence type="ECO:0000303" key="2">
    <source>
    </source>
</evidence>
<evidence type="ECO:0000305" key="3"/>
<evidence type="ECO:0000305" key="4">
    <source>
    </source>
</evidence>
<evidence type="ECO:0000312" key="5">
    <source>
        <dbReference type="EMBL" id="CCC77799.1"/>
    </source>
</evidence>
<evidence type="ECO:0000312" key="6">
    <source>
        <dbReference type="Proteomes" id="UP000000432"/>
    </source>
</evidence>
<evidence type="ECO:0007829" key="7">
    <source>
        <dbReference type="PDB" id="8P4W"/>
    </source>
</evidence>